<gene>
    <name evidence="1" type="primary">rpsQ</name>
    <name type="ordered locus">UUR10_0235</name>
</gene>
<proteinExistence type="inferred from homology"/>
<dbReference type="EMBL" id="CP001184">
    <property type="protein sequence ID" value="ACI60057.1"/>
    <property type="molecule type" value="Genomic_DNA"/>
</dbReference>
<dbReference type="RefSeq" id="WP_004025503.1">
    <property type="nucleotide sequence ID" value="NC_011374.1"/>
</dbReference>
<dbReference type="SMR" id="B5ZB49"/>
<dbReference type="STRING" id="565575.UUR10_0235"/>
<dbReference type="GeneID" id="93848715"/>
<dbReference type="KEGG" id="uue:UUR10_0235"/>
<dbReference type="eggNOG" id="COG0186">
    <property type="taxonomic scope" value="Bacteria"/>
</dbReference>
<dbReference type="HOGENOM" id="CLU_073626_1_0_14"/>
<dbReference type="OrthoDB" id="9811714at2"/>
<dbReference type="Proteomes" id="UP000002018">
    <property type="component" value="Chromosome"/>
</dbReference>
<dbReference type="GO" id="GO:0022627">
    <property type="term" value="C:cytosolic small ribosomal subunit"/>
    <property type="evidence" value="ECO:0007669"/>
    <property type="project" value="TreeGrafter"/>
</dbReference>
<dbReference type="GO" id="GO:0019843">
    <property type="term" value="F:rRNA binding"/>
    <property type="evidence" value="ECO:0007669"/>
    <property type="project" value="UniProtKB-UniRule"/>
</dbReference>
<dbReference type="GO" id="GO:0003735">
    <property type="term" value="F:structural constituent of ribosome"/>
    <property type="evidence" value="ECO:0007669"/>
    <property type="project" value="InterPro"/>
</dbReference>
<dbReference type="GO" id="GO:0006412">
    <property type="term" value="P:translation"/>
    <property type="evidence" value="ECO:0007669"/>
    <property type="project" value="UniProtKB-UniRule"/>
</dbReference>
<dbReference type="CDD" id="cd00364">
    <property type="entry name" value="Ribosomal_uS17"/>
    <property type="match status" value="1"/>
</dbReference>
<dbReference type="Gene3D" id="2.40.50.140">
    <property type="entry name" value="Nucleic acid-binding proteins"/>
    <property type="match status" value="1"/>
</dbReference>
<dbReference type="HAMAP" id="MF_01345_B">
    <property type="entry name" value="Ribosomal_uS17_B"/>
    <property type="match status" value="1"/>
</dbReference>
<dbReference type="InterPro" id="IPR012340">
    <property type="entry name" value="NA-bd_OB-fold"/>
</dbReference>
<dbReference type="InterPro" id="IPR000266">
    <property type="entry name" value="Ribosomal_uS17"/>
</dbReference>
<dbReference type="InterPro" id="IPR019984">
    <property type="entry name" value="Ribosomal_uS17_bact/chlr"/>
</dbReference>
<dbReference type="InterPro" id="IPR019979">
    <property type="entry name" value="Ribosomal_uS17_CS"/>
</dbReference>
<dbReference type="NCBIfam" id="NF004123">
    <property type="entry name" value="PRK05610.1"/>
    <property type="match status" value="1"/>
</dbReference>
<dbReference type="NCBIfam" id="TIGR03635">
    <property type="entry name" value="uS17_bact"/>
    <property type="match status" value="1"/>
</dbReference>
<dbReference type="PANTHER" id="PTHR10744">
    <property type="entry name" value="40S RIBOSOMAL PROTEIN S11 FAMILY MEMBER"/>
    <property type="match status" value="1"/>
</dbReference>
<dbReference type="PANTHER" id="PTHR10744:SF1">
    <property type="entry name" value="SMALL RIBOSOMAL SUBUNIT PROTEIN US17M"/>
    <property type="match status" value="1"/>
</dbReference>
<dbReference type="Pfam" id="PF00366">
    <property type="entry name" value="Ribosomal_S17"/>
    <property type="match status" value="1"/>
</dbReference>
<dbReference type="PRINTS" id="PR00973">
    <property type="entry name" value="RIBOSOMALS17"/>
</dbReference>
<dbReference type="SUPFAM" id="SSF50249">
    <property type="entry name" value="Nucleic acid-binding proteins"/>
    <property type="match status" value="1"/>
</dbReference>
<dbReference type="PROSITE" id="PS00056">
    <property type="entry name" value="RIBOSOMAL_S17"/>
    <property type="match status" value="1"/>
</dbReference>
<evidence type="ECO:0000255" key="1">
    <source>
        <dbReference type="HAMAP-Rule" id="MF_01345"/>
    </source>
</evidence>
<evidence type="ECO:0000305" key="2"/>
<accession>B5ZB49</accession>
<organism>
    <name type="scientific">Ureaplasma urealyticum serovar 10 (strain ATCC 33699 / Western)</name>
    <dbReference type="NCBI Taxonomy" id="565575"/>
    <lineage>
        <taxon>Bacteria</taxon>
        <taxon>Bacillati</taxon>
        <taxon>Mycoplasmatota</taxon>
        <taxon>Mycoplasmoidales</taxon>
        <taxon>Mycoplasmoidaceae</taxon>
        <taxon>Ureaplasma</taxon>
    </lineage>
</organism>
<comment type="function">
    <text evidence="1">One of the primary rRNA binding proteins, it binds specifically to the 5'-end of 16S ribosomal RNA.</text>
</comment>
<comment type="subunit">
    <text evidence="1">Part of the 30S ribosomal subunit.</text>
</comment>
<comment type="similarity">
    <text evidence="1">Belongs to the universal ribosomal protein uS17 family.</text>
</comment>
<feature type="chain" id="PRO_1000143321" description="Small ribosomal subunit protein uS17">
    <location>
        <begin position="1"/>
        <end position="84"/>
    </location>
</feature>
<reference key="1">
    <citation type="submission" date="2008-10" db="EMBL/GenBank/DDBJ databases">
        <title>Genome sequence of Ureaplasma urealyticum serovar 10 ATCC-33699.</title>
        <authorList>
            <person name="Shrivastava S."/>
            <person name="Methe B.A."/>
            <person name="Glass J."/>
            <person name="White K."/>
            <person name="Duffy L.B."/>
        </authorList>
    </citation>
    <scope>NUCLEOTIDE SEQUENCE [LARGE SCALE GENOMIC DNA]</scope>
    <source>
        <strain>ATCC 33699 / Western</strain>
    </source>
</reference>
<sequence>MERSRRKVLEGLVVSDKMQKTVVVSVETKSKHPIYRKLVISHKKYHAHNDNDDAKVGDLVEITETRPLSATKNWRVSKILERAR</sequence>
<keyword id="KW-0687">Ribonucleoprotein</keyword>
<keyword id="KW-0689">Ribosomal protein</keyword>
<keyword id="KW-0694">RNA-binding</keyword>
<keyword id="KW-0699">rRNA-binding</keyword>
<protein>
    <recommendedName>
        <fullName evidence="1">Small ribosomal subunit protein uS17</fullName>
    </recommendedName>
    <alternativeName>
        <fullName evidence="2">30S ribosomal protein S17</fullName>
    </alternativeName>
</protein>
<name>RS17_UREU1</name>